<evidence type="ECO:0000250" key="1">
    <source>
        <dbReference type="UniProtKB" id="A0A0D4WTV1"/>
    </source>
</evidence>
<evidence type="ECO:0000250" key="2">
    <source>
        <dbReference type="UniProtKB" id="A0A0D4WV12"/>
    </source>
</evidence>
<evidence type="ECO:0000250" key="3">
    <source>
        <dbReference type="UniProtKB" id="P0CE80"/>
    </source>
</evidence>
<evidence type="ECO:0000250" key="4">
    <source>
        <dbReference type="UniProtKB" id="Q4ZFU2"/>
    </source>
</evidence>
<evidence type="ECO:0000250" key="5">
    <source>
        <dbReference type="UniProtKB" id="Q8I914"/>
    </source>
</evidence>
<evidence type="ECO:0000303" key="6">
    <source>
    </source>
</evidence>
<evidence type="ECO:0000305" key="7"/>
<evidence type="ECO:0000305" key="8">
    <source>
    </source>
</evidence>
<protein>
    <recommendedName>
        <fullName evidence="6">Dermonecrotic toxin LdSicTox-alphaIB3ai</fullName>
        <ecNumber evidence="4">4.6.1.-</ecNumber>
    </recommendedName>
    <alternativeName>
        <fullName>Phospholipase D</fullName>
        <shortName>PLD</shortName>
    </alternativeName>
    <alternativeName>
        <fullName>Sphingomyelin phosphodiesterase D</fullName>
        <shortName>SMD</shortName>
        <shortName>SMase D</shortName>
        <shortName>Sphingomyelinase D</shortName>
    </alternativeName>
</protein>
<name>A1MA1_LOXDE</name>
<accession>C0JAX3</accession>
<feature type="chain" id="PRO_0000392799" description="Dermonecrotic toxin LdSicTox-alphaIB3ai">
    <location>
        <begin position="1" status="less than"/>
        <end position="273"/>
    </location>
</feature>
<feature type="active site" evidence="5">
    <location>
        <position position="5"/>
    </location>
</feature>
<feature type="active site" description="Nucleophile" evidence="5">
    <location>
        <position position="41"/>
    </location>
</feature>
<feature type="binding site" evidence="5">
    <location>
        <position position="25"/>
    </location>
    <ligand>
        <name>Mg(2+)</name>
        <dbReference type="ChEBI" id="CHEBI:18420"/>
    </ligand>
</feature>
<feature type="binding site" evidence="5">
    <location>
        <position position="27"/>
    </location>
    <ligand>
        <name>Mg(2+)</name>
        <dbReference type="ChEBI" id="CHEBI:18420"/>
    </ligand>
</feature>
<feature type="binding site" evidence="5">
    <location>
        <position position="85"/>
    </location>
    <ligand>
        <name>Mg(2+)</name>
        <dbReference type="ChEBI" id="CHEBI:18420"/>
    </ligand>
</feature>
<feature type="disulfide bond" evidence="3">
    <location>
        <begin position="45"/>
        <end position="51"/>
    </location>
</feature>
<feature type="disulfide bond" evidence="3">
    <location>
        <begin position="47"/>
        <end position="190"/>
    </location>
</feature>
<feature type="non-terminal residue">
    <location>
        <position position="1"/>
    </location>
</feature>
<reference key="1">
    <citation type="journal article" date="2009" name="Mol. Biol. Evol.">
        <title>Molecular evolution, functional variation, and proposed nomenclature of the gene family that includes sphingomyelinase D in sicariid spider venoms.</title>
        <authorList>
            <person name="Binford G.J."/>
            <person name="Bodner M.R."/>
            <person name="Cordes M.H."/>
            <person name="Baldwin K.L."/>
            <person name="Rynerson M.R."/>
            <person name="Burns S.N."/>
            <person name="Zobel-Thropp P.A."/>
        </authorList>
    </citation>
    <scope>NUCLEOTIDE SEQUENCE [MRNA]</scope>
    <scope>NOMENCLATURE</scope>
    <source>
        <tissue>Venom gland</tissue>
    </source>
</reference>
<keyword id="KW-0204">Cytolysis</keyword>
<keyword id="KW-1061">Dermonecrotic toxin</keyword>
<keyword id="KW-1015">Disulfide bond</keyword>
<keyword id="KW-0354">Hemolysis</keyword>
<keyword id="KW-0442">Lipid degradation</keyword>
<keyword id="KW-0443">Lipid metabolism</keyword>
<keyword id="KW-0456">Lyase</keyword>
<keyword id="KW-0460">Magnesium</keyword>
<keyword id="KW-0479">Metal-binding</keyword>
<keyword id="KW-0964">Secreted</keyword>
<keyword id="KW-0800">Toxin</keyword>
<organism>
    <name type="scientific">Loxosceles deserta</name>
    <name type="common">Desert recluse spider</name>
    <dbReference type="NCBI Taxonomy" id="424440"/>
    <lineage>
        <taxon>Eukaryota</taxon>
        <taxon>Metazoa</taxon>
        <taxon>Ecdysozoa</taxon>
        <taxon>Arthropoda</taxon>
        <taxon>Chelicerata</taxon>
        <taxon>Arachnida</taxon>
        <taxon>Araneae</taxon>
        <taxon>Araneomorphae</taxon>
        <taxon>Haplogynae</taxon>
        <taxon>Scytodoidea</taxon>
        <taxon>Sicariidae</taxon>
        <taxon>Loxosceles</taxon>
    </lineage>
</organism>
<proteinExistence type="evidence at transcript level"/>
<sequence length="273" mass="30425">WIMGHMVNAIAQIDEFVNLGANSIETDVSFDKNANPEYTYHGIPCDCGRTCTKSEKFNVFLQGLQKATTPGDSKYQEKLVLVVFDLKSSSLYDNQASDAGKKLAKSLLQNYWKNGNNGGRAYIVLSIPNLAHYKLITGFKETLKTEGHPELMEKVGYDFSGNDDIDQVAKAYKKAGVTGHVWQSDGITNCLPRGLDRVRQAVANRDSSNGFINKVYYWTVDKRSTTRGALDAGVDGIMTNYPDVIAVVLSESAYKSKFRIATYEDNPWETFKN</sequence>
<comment type="function">
    <text evidence="1 3">Dermonecrotic toxins cleave the phosphodiester linkage between the phosphate and headgroup of certain phospholipids (sphingolipid and lysolipid substrates), forming an alcohol (often choline) and a cyclic phosphate (By similarity). This toxin acts on sphingomyelin (SM) (By similarity). It may also act on ceramide phosphoethanolamine (CPE), lysophosphatidylcholine (LPC) and lysophosphatidylethanolamine (LPE), but not on lysophosphatidylserine (LPS), and lysophosphatidylglycerol (LPG) (By similarity). It acts by transphosphatidylation, releasing exclusively cyclic phosphate products as second products (By similarity). Induces dermonecrosis, hemolysis, increased vascular permeability, edema, inflammatory response, and platelet aggregation (By similarity).</text>
</comment>
<comment type="catalytic activity">
    <reaction evidence="1">
        <text>an N-(acyl)-sphingosylphosphocholine = an N-(acyl)-sphingosyl-1,3-cyclic phosphate + choline</text>
        <dbReference type="Rhea" id="RHEA:60652"/>
        <dbReference type="ChEBI" id="CHEBI:15354"/>
        <dbReference type="ChEBI" id="CHEBI:64583"/>
        <dbReference type="ChEBI" id="CHEBI:143892"/>
    </reaction>
</comment>
<comment type="catalytic activity">
    <reaction evidence="1">
        <text>an N-(acyl)-sphingosylphosphoethanolamine = an N-(acyl)-sphingosyl-1,3-cyclic phosphate + ethanolamine</text>
        <dbReference type="Rhea" id="RHEA:60648"/>
        <dbReference type="ChEBI" id="CHEBI:57603"/>
        <dbReference type="ChEBI" id="CHEBI:143891"/>
        <dbReference type="ChEBI" id="CHEBI:143892"/>
    </reaction>
</comment>
<comment type="catalytic activity">
    <reaction evidence="1">
        <text>a 1-acyl-sn-glycero-3-phosphocholine = a 1-acyl-sn-glycero-2,3-cyclic phosphate + choline</text>
        <dbReference type="Rhea" id="RHEA:60700"/>
        <dbReference type="ChEBI" id="CHEBI:15354"/>
        <dbReference type="ChEBI" id="CHEBI:58168"/>
        <dbReference type="ChEBI" id="CHEBI:143947"/>
    </reaction>
</comment>
<comment type="catalytic activity">
    <reaction evidence="1">
        <text>a 1-acyl-sn-glycero-3-phosphoethanolamine = a 1-acyl-sn-glycero-2,3-cyclic phosphate + ethanolamine</text>
        <dbReference type="Rhea" id="RHEA:60704"/>
        <dbReference type="ChEBI" id="CHEBI:57603"/>
        <dbReference type="ChEBI" id="CHEBI:64381"/>
        <dbReference type="ChEBI" id="CHEBI:143947"/>
    </reaction>
</comment>
<comment type="cofactor">
    <cofactor evidence="5">
        <name>Mg(2+)</name>
        <dbReference type="ChEBI" id="CHEBI:18420"/>
    </cofactor>
    <text evidence="5">Binds 1 Mg(2+) ion per subunit.</text>
</comment>
<comment type="subcellular location">
    <subcellularLocation>
        <location evidence="8">Secreted</location>
    </subcellularLocation>
</comment>
<comment type="tissue specificity">
    <text evidence="8">Expressed by the venom gland.</text>
</comment>
<comment type="similarity">
    <text evidence="7">Belongs to the arthropod phospholipase D family. Class II subfamily.</text>
</comment>
<comment type="caution">
    <text evidence="1 2 4">The most common activity assay for dermonecrotic toxins detects enzymatic activity by monitoring choline release from substrate. Liberation of choline from sphingomyelin (SM) or lysophosphatidylcholine (LPC) is commonly assumed to result from substrate hydrolysis, giving either ceramide-1-phosphate (C1P) or lysophosphatidic acid (LPA), respectively, as a second product. However, two studies from Lajoie and colleagues (2013 and 2015) report the observation of exclusive formation of cyclic phosphate products as second products, resulting from intramolecular transphosphatidylation. Cyclic phosphates have vastly different biological properties from their monoester counterparts, and they may be relevant to the pathology of brown spider envenomation.</text>
</comment>
<dbReference type="EC" id="4.6.1.-" evidence="4"/>
<dbReference type="EMBL" id="FJ171408">
    <property type="protein sequence ID" value="ACN48904.1"/>
    <property type="molecule type" value="mRNA"/>
</dbReference>
<dbReference type="SMR" id="C0JAX3"/>
<dbReference type="GO" id="GO:0005576">
    <property type="term" value="C:extracellular region"/>
    <property type="evidence" value="ECO:0007669"/>
    <property type="project" value="UniProtKB-SubCell"/>
</dbReference>
<dbReference type="GO" id="GO:0016829">
    <property type="term" value="F:lyase activity"/>
    <property type="evidence" value="ECO:0007669"/>
    <property type="project" value="UniProtKB-KW"/>
</dbReference>
<dbReference type="GO" id="GO:0046872">
    <property type="term" value="F:metal ion binding"/>
    <property type="evidence" value="ECO:0007669"/>
    <property type="project" value="UniProtKB-KW"/>
</dbReference>
<dbReference type="GO" id="GO:0008081">
    <property type="term" value="F:phosphoric diester hydrolase activity"/>
    <property type="evidence" value="ECO:0007669"/>
    <property type="project" value="InterPro"/>
</dbReference>
<dbReference type="GO" id="GO:0090729">
    <property type="term" value="F:toxin activity"/>
    <property type="evidence" value="ECO:0007669"/>
    <property type="project" value="UniProtKB-KW"/>
</dbReference>
<dbReference type="GO" id="GO:0031640">
    <property type="term" value="P:killing of cells of another organism"/>
    <property type="evidence" value="ECO:0007669"/>
    <property type="project" value="UniProtKB-KW"/>
</dbReference>
<dbReference type="GO" id="GO:0016042">
    <property type="term" value="P:lipid catabolic process"/>
    <property type="evidence" value="ECO:0007669"/>
    <property type="project" value="UniProtKB-KW"/>
</dbReference>
<dbReference type="CDD" id="cd08576">
    <property type="entry name" value="GDPD_like_SMaseD_PLD"/>
    <property type="match status" value="1"/>
</dbReference>
<dbReference type="Gene3D" id="3.20.20.190">
    <property type="entry name" value="Phosphatidylinositol (PI) phosphodiesterase"/>
    <property type="match status" value="1"/>
</dbReference>
<dbReference type="InterPro" id="IPR017946">
    <property type="entry name" value="PLC-like_Pdiesterase_TIM-brl"/>
</dbReference>
<dbReference type="Pfam" id="PF13653">
    <property type="entry name" value="GDPD_2"/>
    <property type="match status" value="1"/>
</dbReference>
<dbReference type="SUPFAM" id="SSF51695">
    <property type="entry name" value="PLC-like phosphodiesterases"/>
    <property type="match status" value="1"/>
</dbReference>